<organism>
    <name type="scientific">Xenopus tropicalis</name>
    <name type="common">Western clawed frog</name>
    <name type="synonym">Silurana tropicalis</name>
    <dbReference type="NCBI Taxonomy" id="8364"/>
    <lineage>
        <taxon>Eukaryota</taxon>
        <taxon>Metazoa</taxon>
        <taxon>Chordata</taxon>
        <taxon>Craniata</taxon>
        <taxon>Vertebrata</taxon>
        <taxon>Euteleostomi</taxon>
        <taxon>Amphibia</taxon>
        <taxon>Batrachia</taxon>
        <taxon>Anura</taxon>
        <taxon>Pipoidea</taxon>
        <taxon>Pipidae</taxon>
        <taxon>Xenopodinae</taxon>
        <taxon>Xenopus</taxon>
        <taxon>Silurana</taxon>
    </lineage>
</organism>
<accession>Q66JF1</accession>
<name>SOX11_XENTR</name>
<protein>
    <recommendedName>
        <fullName>Transcription factor Sox-11</fullName>
    </recommendedName>
</protein>
<gene>
    <name evidence="5" type="primary">sox11</name>
</gene>
<comment type="function">
    <text evidence="1 2">Transcription factor that binds to the DNA sequence 5'-AACAAT-3' (By similarity). Acts as a transcriptional activator (By similarity). Plays a role together with nlk in neural induction during early embryogenesis (By similarity).</text>
</comment>
<comment type="subunit">
    <text evidence="2">Interacts with nlk.</text>
</comment>
<comment type="subcellular location">
    <subcellularLocation>
        <location evidence="1 3">Nucleus</location>
    </subcellularLocation>
</comment>
<feature type="chain" id="PRO_0000371505" description="Transcription factor Sox-11">
    <location>
        <begin position="1"/>
        <end position="383"/>
    </location>
</feature>
<feature type="DNA-binding region" description="HMG box" evidence="3">
    <location>
        <begin position="48"/>
        <end position="116"/>
    </location>
</feature>
<feature type="region of interest" description="Disordered" evidence="4">
    <location>
        <begin position="1"/>
        <end position="24"/>
    </location>
</feature>
<feature type="region of interest" description="Disordered" evidence="4">
    <location>
        <begin position="115"/>
        <end position="174"/>
    </location>
</feature>
<feature type="region of interest" description="Disordered" evidence="4">
    <location>
        <begin position="197"/>
        <end position="231"/>
    </location>
</feature>
<feature type="compositionally biased region" description="Polar residues" evidence="4">
    <location>
        <begin position="1"/>
        <end position="11"/>
    </location>
</feature>
<feature type="compositionally biased region" description="Low complexity" evidence="4">
    <location>
        <begin position="158"/>
        <end position="169"/>
    </location>
</feature>
<feature type="compositionally biased region" description="Acidic residues" evidence="4">
    <location>
        <begin position="201"/>
        <end position="216"/>
    </location>
</feature>
<keyword id="KW-0010">Activator</keyword>
<keyword id="KW-0217">Developmental protein</keyword>
<keyword id="KW-0221">Differentiation</keyword>
<keyword id="KW-0238">DNA-binding</keyword>
<keyword id="KW-0524">Neurogenesis</keyword>
<keyword id="KW-0539">Nucleus</keyword>
<keyword id="KW-1185">Reference proteome</keyword>
<keyword id="KW-0804">Transcription</keyword>
<keyword id="KW-0805">Transcription regulation</keyword>
<dbReference type="EMBL" id="AC148407">
    <property type="protein sequence ID" value="AAY98914.1"/>
    <property type="molecule type" value="Genomic_DNA"/>
</dbReference>
<dbReference type="EMBL" id="BC080939">
    <property type="protein sequence ID" value="AAH80939.1"/>
    <property type="molecule type" value="mRNA"/>
</dbReference>
<dbReference type="RefSeq" id="NP_001008053.1">
    <property type="nucleotide sequence ID" value="NM_001008052.1"/>
</dbReference>
<dbReference type="SMR" id="Q66JF1"/>
<dbReference type="FunCoup" id="Q66JF1">
    <property type="interactions" value="869"/>
</dbReference>
<dbReference type="STRING" id="8364.ENSXETP00000001029"/>
<dbReference type="DNASU" id="493415"/>
<dbReference type="GeneID" id="493415"/>
<dbReference type="KEGG" id="xtr:493415"/>
<dbReference type="AGR" id="Xenbase:XB-GENE-483418"/>
<dbReference type="CTD" id="6664"/>
<dbReference type="Xenbase" id="XB-GENE-483418">
    <property type="gene designation" value="sox11"/>
</dbReference>
<dbReference type="InParanoid" id="Q66JF1"/>
<dbReference type="OMA" id="VKCVFMD"/>
<dbReference type="OrthoDB" id="6247875at2759"/>
<dbReference type="Proteomes" id="UP000008143">
    <property type="component" value="Chromosome 5"/>
</dbReference>
<dbReference type="Bgee" id="ENSXETG00000038964">
    <property type="expression patterns" value="Expressed in neurula embryo and 13 other cell types or tissues"/>
</dbReference>
<dbReference type="GO" id="GO:0005634">
    <property type="term" value="C:nucleus"/>
    <property type="evidence" value="ECO:0007669"/>
    <property type="project" value="UniProtKB-SubCell"/>
</dbReference>
<dbReference type="GO" id="GO:0003677">
    <property type="term" value="F:DNA binding"/>
    <property type="evidence" value="ECO:0000250"/>
    <property type="project" value="UniProtKB"/>
</dbReference>
<dbReference type="GO" id="GO:0000981">
    <property type="term" value="F:DNA-binding transcription factor activity, RNA polymerase II-specific"/>
    <property type="evidence" value="ECO:0007669"/>
    <property type="project" value="InterPro"/>
</dbReference>
<dbReference type="GO" id="GO:0043565">
    <property type="term" value="F:sequence-specific DNA binding"/>
    <property type="evidence" value="ECO:0000250"/>
    <property type="project" value="UniProtKB"/>
</dbReference>
<dbReference type="GO" id="GO:0030154">
    <property type="term" value="P:cell differentiation"/>
    <property type="evidence" value="ECO:0007669"/>
    <property type="project" value="UniProtKB-KW"/>
</dbReference>
<dbReference type="GO" id="GO:0060322">
    <property type="term" value="P:head development"/>
    <property type="evidence" value="ECO:0000315"/>
    <property type="project" value="Xenbase"/>
</dbReference>
<dbReference type="GO" id="GO:0007399">
    <property type="term" value="P:nervous system development"/>
    <property type="evidence" value="ECO:0000250"/>
    <property type="project" value="UniProtKB"/>
</dbReference>
<dbReference type="CDD" id="cd22037">
    <property type="entry name" value="HMG-box_SoxC_SOX11"/>
    <property type="match status" value="1"/>
</dbReference>
<dbReference type="FunFam" id="1.10.30.10:FF:000007">
    <property type="entry name" value="Transcription factor SOX"/>
    <property type="match status" value="1"/>
</dbReference>
<dbReference type="Gene3D" id="1.10.30.10">
    <property type="entry name" value="High mobility group box domain"/>
    <property type="match status" value="1"/>
</dbReference>
<dbReference type="InterPro" id="IPR009071">
    <property type="entry name" value="HMG_box_dom"/>
</dbReference>
<dbReference type="InterPro" id="IPR036910">
    <property type="entry name" value="HMG_box_dom_sf"/>
</dbReference>
<dbReference type="InterPro" id="IPR017386">
    <property type="entry name" value="SOX-12/11/4"/>
</dbReference>
<dbReference type="InterPro" id="IPR050140">
    <property type="entry name" value="SRY-related_HMG-box_TF-like"/>
</dbReference>
<dbReference type="PANTHER" id="PTHR10270">
    <property type="entry name" value="SOX TRANSCRIPTION FACTOR"/>
    <property type="match status" value="1"/>
</dbReference>
<dbReference type="PANTHER" id="PTHR10270:SF113">
    <property type="entry name" value="TRANSCRIPTION FACTOR SOX-11"/>
    <property type="match status" value="1"/>
</dbReference>
<dbReference type="Pfam" id="PF00505">
    <property type="entry name" value="HMG_box"/>
    <property type="match status" value="1"/>
</dbReference>
<dbReference type="PIRSF" id="PIRSF038098">
    <property type="entry name" value="SOX-12/11/4a"/>
    <property type="match status" value="1"/>
</dbReference>
<dbReference type="SMART" id="SM00398">
    <property type="entry name" value="HMG"/>
    <property type="match status" value="1"/>
</dbReference>
<dbReference type="SUPFAM" id="SSF47095">
    <property type="entry name" value="HMG-box"/>
    <property type="match status" value="1"/>
</dbReference>
<dbReference type="PROSITE" id="PS50118">
    <property type="entry name" value="HMG_BOX_2"/>
    <property type="match status" value="1"/>
</dbReference>
<reference evidence="6" key="1">
    <citation type="submission" date="2005-07" db="EMBL/GenBank/DDBJ databases">
        <title>Sequence of Xenopus tropicalis development genes.</title>
        <authorList>
            <person name="Qin S."/>
            <person name="Dors M."/>
            <person name="Johnson E."/>
            <person name="Bloom S."/>
            <person name="Hood L."/>
            <person name="Rowen L."/>
        </authorList>
    </citation>
    <scope>NUCLEOTIDE SEQUENCE [GENOMIC DNA]</scope>
</reference>
<reference evidence="6" key="2">
    <citation type="submission" date="2004-08" db="EMBL/GenBank/DDBJ databases">
        <authorList>
            <consortium name="NIH - Xenopus Gene Collection (XGC) project"/>
        </authorList>
    </citation>
    <scope>NUCLEOTIDE SEQUENCE [LARGE SCALE MRNA]</scope>
    <source>
        <tissue evidence="5">Tail bud</tissue>
    </source>
</reference>
<evidence type="ECO:0000250" key="1">
    <source>
        <dbReference type="UniProtKB" id="Q7M6Y2"/>
    </source>
</evidence>
<evidence type="ECO:0000250" key="2">
    <source>
        <dbReference type="UniProtKB" id="Q91731"/>
    </source>
</evidence>
<evidence type="ECO:0000255" key="3">
    <source>
        <dbReference type="PROSITE-ProRule" id="PRU00267"/>
    </source>
</evidence>
<evidence type="ECO:0000256" key="4">
    <source>
        <dbReference type="SAM" id="MobiDB-lite"/>
    </source>
</evidence>
<evidence type="ECO:0000312" key="5">
    <source>
        <dbReference type="EMBL" id="AAH80939.1"/>
    </source>
</evidence>
<evidence type="ECO:0000312" key="6">
    <source>
        <dbReference type="EMBL" id="AAY98914.1"/>
    </source>
</evidence>
<sequence>MVQQADSLDMDSSQHTEPDTEEGEFMACSPVALDESDPDWCKTATGHIKRPMNAFMVWSKIERRKIMEQSPDMHNAEISKRLGKRWKMLNDSEKIPFIREAERLRLKHMADYPDYKYRPRKKPKVDPSASKPASLAQSPEKSPKSRSAGKKCPKLKPGSHSGSSSSSGSAKSLTIKSEYGGDDYVFGSPKAASKAAKCVFMDEDDEEEEEDEEEDELQIRIKQEEEDEPLRQYNVAKVPASPTLSSSSAESAEGASMYEDVRNGTRLYYNFKNITKQSTIPQATITLAPAPRSAGTTSPSSHKDELMFDLSLNFTQQNPPVPELGNPNSGNLSLSLVDKDLDSCSEGSLGSHFDFPDYCTPELSEMIAGDWLEANFSDLVFTY</sequence>
<proteinExistence type="evidence at transcript level"/>